<protein>
    <recommendedName>
        <fullName evidence="1">Small ribosomal subunit protein uS2</fullName>
    </recommendedName>
    <alternativeName>
        <fullName evidence="3">30S ribosomal protein S2</fullName>
    </alternativeName>
</protein>
<reference key="1">
    <citation type="journal article" date="2006" name="Lancet">
        <title>Complete genome sequence of USA300, an epidemic clone of community-acquired meticillin-resistant Staphylococcus aureus.</title>
        <authorList>
            <person name="Diep B.A."/>
            <person name="Gill S.R."/>
            <person name="Chang R.F."/>
            <person name="Phan T.H."/>
            <person name="Chen J.H."/>
            <person name="Davidson M.G."/>
            <person name="Lin F."/>
            <person name="Lin J."/>
            <person name="Carleton H.A."/>
            <person name="Mongodin E.F."/>
            <person name="Sensabaugh G.F."/>
            <person name="Perdreau-Remington F."/>
        </authorList>
    </citation>
    <scope>NUCLEOTIDE SEQUENCE [LARGE SCALE GENOMIC DNA]</scope>
    <source>
        <strain>USA300</strain>
    </source>
</reference>
<accession>Q2FHI2</accession>
<keyword id="KW-0687">Ribonucleoprotein</keyword>
<keyword id="KW-0689">Ribosomal protein</keyword>
<feature type="chain" id="PRO_1000004081" description="Small ribosomal subunit protein uS2">
    <location>
        <begin position="1"/>
        <end position="255"/>
    </location>
</feature>
<feature type="region of interest" description="Disordered" evidence="2">
    <location>
        <begin position="226"/>
        <end position="255"/>
    </location>
</feature>
<comment type="similarity">
    <text evidence="1">Belongs to the universal ribosomal protein uS2 family.</text>
</comment>
<organism>
    <name type="scientific">Staphylococcus aureus (strain USA300)</name>
    <dbReference type="NCBI Taxonomy" id="367830"/>
    <lineage>
        <taxon>Bacteria</taxon>
        <taxon>Bacillati</taxon>
        <taxon>Bacillota</taxon>
        <taxon>Bacilli</taxon>
        <taxon>Bacillales</taxon>
        <taxon>Staphylococcaceae</taxon>
        <taxon>Staphylococcus</taxon>
    </lineage>
</organism>
<proteinExistence type="inferred from homology"/>
<evidence type="ECO:0000255" key="1">
    <source>
        <dbReference type="HAMAP-Rule" id="MF_00291"/>
    </source>
</evidence>
<evidence type="ECO:0000256" key="2">
    <source>
        <dbReference type="SAM" id="MobiDB-lite"/>
    </source>
</evidence>
<evidence type="ECO:0000305" key="3"/>
<gene>
    <name evidence="1" type="primary">rpsB</name>
    <name type="ordered locus">SAUSA300_1149</name>
</gene>
<sequence>MAVISMKQLLEAGVHFGHQTRRWNPKMKKYIFTERNGIYIIDLQKTVKKVDEAYNFLKQVSEDGGQVLFVGTKKQAQESVKSEAERAGQFYINQRWLGGLLTNYKTISKRIKRISEIEKMEEDGLFEVLPKKEVVELKKEYDRLIKFLGGIRDMKSMPQALFVVDPRKERNAIAEARKLNIPIVGIVDTNCDPDEIDYVIPANDDAIRAVKLLTAKMADAILEGQQGVSNEEVAAEQNIDLDEKEKSEETEATEE</sequence>
<name>RS2_STAA3</name>
<dbReference type="EMBL" id="CP000255">
    <property type="protein sequence ID" value="ABD21160.1"/>
    <property type="molecule type" value="Genomic_DNA"/>
</dbReference>
<dbReference type="RefSeq" id="WP_000268484.1">
    <property type="nucleotide sequence ID" value="NZ_CP027476.1"/>
</dbReference>
<dbReference type="SMR" id="Q2FHI2"/>
<dbReference type="GeneID" id="98345571"/>
<dbReference type="KEGG" id="saa:SAUSA300_1149"/>
<dbReference type="HOGENOM" id="CLU_040318_1_2_9"/>
<dbReference type="OMA" id="PYIFMEK"/>
<dbReference type="Proteomes" id="UP000001939">
    <property type="component" value="Chromosome"/>
</dbReference>
<dbReference type="GO" id="GO:0022627">
    <property type="term" value="C:cytosolic small ribosomal subunit"/>
    <property type="evidence" value="ECO:0007669"/>
    <property type="project" value="TreeGrafter"/>
</dbReference>
<dbReference type="GO" id="GO:0003735">
    <property type="term" value="F:structural constituent of ribosome"/>
    <property type="evidence" value="ECO:0007669"/>
    <property type="project" value="InterPro"/>
</dbReference>
<dbReference type="GO" id="GO:0006412">
    <property type="term" value="P:translation"/>
    <property type="evidence" value="ECO:0007669"/>
    <property type="project" value="UniProtKB-UniRule"/>
</dbReference>
<dbReference type="CDD" id="cd01425">
    <property type="entry name" value="RPS2"/>
    <property type="match status" value="1"/>
</dbReference>
<dbReference type="FunFam" id="1.10.287.610:FF:000001">
    <property type="entry name" value="30S ribosomal protein S2"/>
    <property type="match status" value="1"/>
</dbReference>
<dbReference type="Gene3D" id="3.40.50.10490">
    <property type="entry name" value="Glucose-6-phosphate isomerase like protein, domain 1"/>
    <property type="match status" value="1"/>
</dbReference>
<dbReference type="Gene3D" id="1.10.287.610">
    <property type="entry name" value="Helix hairpin bin"/>
    <property type="match status" value="1"/>
</dbReference>
<dbReference type="HAMAP" id="MF_00291_B">
    <property type="entry name" value="Ribosomal_uS2_B"/>
    <property type="match status" value="1"/>
</dbReference>
<dbReference type="InterPro" id="IPR001865">
    <property type="entry name" value="Ribosomal_uS2"/>
</dbReference>
<dbReference type="InterPro" id="IPR005706">
    <property type="entry name" value="Ribosomal_uS2_bac/mit/plastid"/>
</dbReference>
<dbReference type="InterPro" id="IPR018130">
    <property type="entry name" value="Ribosomal_uS2_CS"/>
</dbReference>
<dbReference type="InterPro" id="IPR023591">
    <property type="entry name" value="Ribosomal_uS2_flav_dom_sf"/>
</dbReference>
<dbReference type="NCBIfam" id="TIGR01011">
    <property type="entry name" value="rpsB_bact"/>
    <property type="match status" value="1"/>
</dbReference>
<dbReference type="PANTHER" id="PTHR12534">
    <property type="entry name" value="30S RIBOSOMAL PROTEIN S2 PROKARYOTIC AND ORGANELLAR"/>
    <property type="match status" value="1"/>
</dbReference>
<dbReference type="PANTHER" id="PTHR12534:SF0">
    <property type="entry name" value="SMALL RIBOSOMAL SUBUNIT PROTEIN US2M"/>
    <property type="match status" value="1"/>
</dbReference>
<dbReference type="Pfam" id="PF00318">
    <property type="entry name" value="Ribosomal_S2"/>
    <property type="match status" value="1"/>
</dbReference>
<dbReference type="PRINTS" id="PR00395">
    <property type="entry name" value="RIBOSOMALS2"/>
</dbReference>
<dbReference type="SUPFAM" id="SSF52313">
    <property type="entry name" value="Ribosomal protein S2"/>
    <property type="match status" value="1"/>
</dbReference>
<dbReference type="PROSITE" id="PS00962">
    <property type="entry name" value="RIBOSOMAL_S2_1"/>
    <property type="match status" value="1"/>
</dbReference>
<dbReference type="PROSITE" id="PS00963">
    <property type="entry name" value="RIBOSOMAL_S2_2"/>
    <property type="match status" value="1"/>
</dbReference>